<feature type="initiator methionine" description="Removed" evidence="7">
    <location>
        <position position="1"/>
    </location>
</feature>
<feature type="chain" id="PRO_0000087164" description="Mitochondrial fission regulator 2">
    <location>
        <begin position="2"/>
        <end position="385"/>
    </location>
</feature>
<feature type="region of interest" description="Disordered" evidence="2">
    <location>
        <begin position="195"/>
        <end position="268"/>
    </location>
</feature>
<feature type="region of interest" description="Disordered" evidence="2">
    <location>
        <begin position="331"/>
        <end position="363"/>
    </location>
</feature>
<feature type="compositionally biased region" description="Pro residues" evidence="2">
    <location>
        <begin position="207"/>
        <end position="216"/>
    </location>
</feature>
<feature type="compositionally biased region" description="Polar residues" evidence="2">
    <location>
        <begin position="231"/>
        <end position="257"/>
    </location>
</feature>
<feature type="compositionally biased region" description="Polar residues" evidence="2">
    <location>
        <begin position="336"/>
        <end position="346"/>
    </location>
</feature>
<feature type="modified residue" description="N-acetylserine" evidence="7">
    <location>
        <position position="2"/>
    </location>
</feature>
<feature type="modified residue" description="Phosphoserine" evidence="6">
    <location>
        <position position="119"/>
    </location>
</feature>
<feature type="modified residue" description="Phosphoserine" evidence="6">
    <location>
        <position position="291"/>
    </location>
</feature>
<feature type="modified residue" description="Phosphoserine" evidence="5 6">
    <location>
        <position position="328"/>
    </location>
</feature>
<feature type="splice variant" id="VSP_039795" description="In isoform 2." evidence="3">
    <original>VLLIWENKDYGSTRSIVRIIGKM</original>
    <variation>LEVTSAYLSSLWKKQTGRNLRST</variation>
    <location>
        <begin position="22"/>
        <end position="44"/>
    </location>
</feature>
<feature type="splice variant" id="VSP_039796" description="In isoform 2." evidence="3">
    <location>
        <begin position="45"/>
        <end position="385"/>
    </location>
</feature>
<comment type="function">
    <text evidence="1">May play a role in mitochondrial aerobic respiration essentially in the testis. Can also promote mitochondrial fission (By similarity).</text>
</comment>
<comment type="interaction">
    <interactant intactId="EBI-10252703">
        <id>Q6P444</id>
    </interactant>
    <interactant intactId="EBI-3905054">
        <id>P13196</id>
        <label>ALAS1</label>
    </interactant>
    <organismsDiffer>false</organismsDiffer>
    <experiments>5</experiments>
</comment>
<comment type="interaction">
    <interactant intactId="EBI-10252703">
        <id>Q6P444</id>
    </interactant>
    <interactant intactId="EBI-618309">
        <id>Q08379</id>
        <label>GOLGA2</label>
    </interactant>
    <organismsDiffer>false</organismsDiffer>
    <experiments>3</experiments>
</comment>
<comment type="interaction">
    <interactant intactId="EBI-10252703">
        <id>Q6P444</id>
    </interactant>
    <interactant intactId="EBI-749530">
        <id>P43365</id>
        <label>MAGEA12</label>
    </interactant>
    <organismsDiffer>false</organismsDiffer>
    <experiments>3</experiments>
</comment>
<comment type="interaction">
    <interactant intactId="EBI-10252703">
        <id>Q6P444</id>
    </interactant>
    <interactant intactId="EBI-1105213">
        <id>Q9UBB9</id>
        <label>TFIP11</label>
    </interactant>
    <organismsDiffer>false</organismsDiffer>
    <experiments>3</experiments>
</comment>
<comment type="interaction">
    <interactant intactId="EBI-10252703">
        <id>Q6P444</id>
    </interactant>
    <interactant intactId="EBI-740098">
        <id>P36406</id>
        <label>TRIM23</label>
    </interactant>
    <organismsDiffer>false</organismsDiffer>
    <experiments>3</experiments>
</comment>
<comment type="subcellular location">
    <subcellularLocation>
        <location evidence="1">Mitochondrion</location>
    </subcellularLocation>
    <text evidence="1">Associated with membranes.</text>
</comment>
<comment type="alternative products">
    <event type="alternative splicing"/>
    <isoform>
        <id>Q6P444-1</id>
        <name>1</name>
        <sequence type="displayed"/>
    </isoform>
    <isoform>
        <id>Q6P444-2</id>
        <name>2</name>
        <sequence type="described" ref="VSP_039795 VSP_039796"/>
    </isoform>
</comment>
<comment type="miscellaneous">
    <molecule>Isoform 2</molecule>
    <text evidence="4">May be produced at very low levels due to a premature stop codon in the mRNA, leading to nonsense-mediated mRNA decay.</text>
</comment>
<comment type="similarity">
    <text evidence="4">Belongs to the MTFR1 family.</text>
</comment>
<comment type="sequence caution" evidence="4">
    <conflict type="erroneous translation">
        <sequence resource="EMBL-CDS" id="BAC86277"/>
    </conflict>
    <text>Wrong choice of CDS.</text>
</comment>
<keyword id="KW-0007">Acetylation</keyword>
<keyword id="KW-0025">Alternative splicing</keyword>
<keyword id="KW-0496">Mitochondrion</keyword>
<keyword id="KW-0597">Phosphoprotein</keyword>
<keyword id="KW-1267">Proteomics identification</keyword>
<keyword id="KW-1185">Reference proteome</keyword>
<gene>
    <name type="primary">MTFR2</name>
    <name type="synonym">DUFD1</name>
    <name type="synonym">FAM54A</name>
</gene>
<organism>
    <name type="scientific">Homo sapiens</name>
    <name type="common">Human</name>
    <dbReference type="NCBI Taxonomy" id="9606"/>
    <lineage>
        <taxon>Eukaryota</taxon>
        <taxon>Metazoa</taxon>
        <taxon>Chordata</taxon>
        <taxon>Craniata</taxon>
        <taxon>Vertebrata</taxon>
        <taxon>Euteleostomi</taxon>
        <taxon>Mammalia</taxon>
        <taxon>Eutheria</taxon>
        <taxon>Euarchontoglires</taxon>
        <taxon>Primates</taxon>
        <taxon>Haplorrhini</taxon>
        <taxon>Catarrhini</taxon>
        <taxon>Hominidae</taxon>
        <taxon>Homo</taxon>
    </lineage>
</organism>
<reference key="1">
    <citation type="journal article" date="2004" name="Nat. Genet.">
        <title>Complete sequencing and characterization of 21,243 full-length human cDNAs.</title>
        <authorList>
            <person name="Ota T."/>
            <person name="Suzuki Y."/>
            <person name="Nishikawa T."/>
            <person name="Otsuki T."/>
            <person name="Sugiyama T."/>
            <person name="Irie R."/>
            <person name="Wakamatsu A."/>
            <person name="Hayashi K."/>
            <person name="Sato H."/>
            <person name="Nagai K."/>
            <person name="Kimura K."/>
            <person name="Makita H."/>
            <person name="Sekine M."/>
            <person name="Obayashi M."/>
            <person name="Nishi T."/>
            <person name="Shibahara T."/>
            <person name="Tanaka T."/>
            <person name="Ishii S."/>
            <person name="Yamamoto J."/>
            <person name="Saito K."/>
            <person name="Kawai Y."/>
            <person name="Isono Y."/>
            <person name="Nakamura Y."/>
            <person name="Nagahari K."/>
            <person name="Murakami K."/>
            <person name="Yasuda T."/>
            <person name="Iwayanagi T."/>
            <person name="Wagatsuma M."/>
            <person name="Shiratori A."/>
            <person name="Sudo H."/>
            <person name="Hosoiri T."/>
            <person name="Kaku Y."/>
            <person name="Kodaira H."/>
            <person name="Kondo H."/>
            <person name="Sugawara M."/>
            <person name="Takahashi M."/>
            <person name="Kanda K."/>
            <person name="Yokoi T."/>
            <person name="Furuya T."/>
            <person name="Kikkawa E."/>
            <person name="Omura Y."/>
            <person name="Abe K."/>
            <person name="Kamihara K."/>
            <person name="Katsuta N."/>
            <person name="Sato K."/>
            <person name="Tanikawa M."/>
            <person name="Yamazaki M."/>
            <person name="Ninomiya K."/>
            <person name="Ishibashi T."/>
            <person name="Yamashita H."/>
            <person name="Murakawa K."/>
            <person name="Fujimori K."/>
            <person name="Tanai H."/>
            <person name="Kimata M."/>
            <person name="Watanabe M."/>
            <person name="Hiraoka S."/>
            <person name="Chiba Y."/>
            <person name="Ishida S."/>
            <person name="Ono Y."/>
            <person name="Takiguchi S."/>
            <person name="Watanabe S."/>
            <person name="Yosida M."/>
            <person name="Hotuta T."/>
            <person name="Kusano J."/>
            <person name="Kanehori K."/>
            <person name="Takahashi-Fujii A."/>
            <person name="Hara H."/>
            <person name="Tanase T.-O."/>
            <person name="Nomura Y."/>
            <person name="Togiya S."/>
            <person name="Komai F."/>
            <person name="Hara R."/>
            <person name="Takeuchi K."/>
            <person name="Arita M."/>
            <person name="Imose N."/>
            <person name="Musashino K."/>
            <person name="Yuuki H."/>
            <person name="Oshima A."/>
            <person name="Sasaki N."/>
            <person name="Aotsuka S."/>
            <person name="Yoshikawa Y."/>
            <person name="Matsunawa H."/>
            <person name="Ichihara T."/>
            <person name="Shiohata N."/>
            <person name="Sano S."/>
            <person name="Moriya S."/>
            <person name="Momiyama H."/>
            <person name="Satoh N."/>
            <person name="Takami S."/>
            <person name="Terashima Y."/>
            <person name="Suzuki O."/>
            <person name="Nakagawa S."/>
            <person name="Senoh A."/>
            <person name="Mizoguchi H."/>
            <person name="Goto Y."/>
            <person name="Shimizu F."/>
            <person name="Wakebe H."/>
            <person name="Hishigaki H."/>
            <person name="Watanabe T."/>
            <person name="Sugiyama A."/>
            <person name="Takemoto M."/>
            <person name="Kawakami B."/>
            <person name="Yamazaki M."/>
            <person name="Watanabe K."/>
            <person name="Kumagai A."/>
            <person name="Itakura S."/>
            <person name="Fukuzumi Y."/>
            <person name="Fujimori Y."/>
            <person name="Komiyama M."/>
            <person name="Tashiro H."/>
            <person name="Tanigami A."/>
            <person name="Fujiwara T."/>
            <person name="Ono T."/>
            <person name="Yamada K."/>
            <person name="Fujii Y."/>
            <person name="Ozaki K."/>
            <person name="Hirao M."/>
            <person name="Ohmori Y."/>
            <person name="Kawabata A."/>
            <person name="Hikiji T."/>
            <person name="Kobatake N."/>
            <person name="Inagaki H."/>
            <person name="Ikema Y."/>
            <person name="Okamoto S."/>
            <person name="Okitani R."/>
            <person name="Kawakami T."/>
            <person name="Noguchi S."/>
            <person name="Itoh T."/>
            <person name="Shigeta K."/>
            <person name="Senba T."/>
            <person name="Matsumura K."/>
            <person name="Nakajima Y."/>
            <person name="Mizuno T."/>
            <person name="Morinaga M."/>
            <person name="Sasaki M."/>
            <person name="Togashi T."/>
            <person name="Oyama M."/>
            <person name="Hata H."/>
            <person name="Watanabe M."/>
            <person name="Komatsu T."/>
            <person name="Mizushima-Sugano J."/>
            <person name="Satoh T."/>
            <person name="Shirai Y."/>
            <person name="Takahashi Y."/>
            <person name="Nakagawa K."/>
            <person name="Okumura K."/>
            <person name="Nagase T."/>
            <person name="Nomura N."/>
            <person name="Kikuchi H."/>
            <person name="Masuho Y."/>
            <person name="Yamashita R."/>
            <person name="Nakai K."/>
            <person name="Yada T."/>
            <person name="Nakamura Y."/>
            <person name="Ohara O."/>
            <person name="Isogai T."/>
            <person name="Sugano S."/>
        </authorList>
    </citation>
    <scope>NUCLEOTIDE SEQUENCE [LARGE SCALE MRNA] (ISOFORMS 1 AND 2)</scope>
    <source>
        <tissue>Testis</tissue>
    </source>
</reference>
<reference key="2">
    <citation type="journal article" date="2003" name="Nature">
        <title>The DNA sequence and analysis of human chromosome 6.</title>
        <authorList>
            <person name="Mungall A.J."/>
            <person name="Palmer S.A."/>
            <person name="Sims S.K."/>
            <person name="Edwards C.A."/>
            <person name="Ashurst J.L."/>
            <person name="Wilming L."/>
            <person name="Jones M.C."/>
            <person name="Horton R."/>
            <person name="Hunt S.E."/>
            <person name="Scott C.E."/>
            <person name="Gilbert J.G.R."/>
            <person name="Clamp M.E."/>
            <person name="Bethel G."/>
            <person name="Milne S."/>
            <person name="Ainscough R."/>
            <person name="Almeida J.P."/>
            <person name="Ambrose K.D."/>
            <person name="Andrews T.D."/>
            <person name="Ashwell R.I.S."/>
            <person name="Babbage A.K."/>
            <person name="Bagguley C.L."/>
            <person name="Bailey J."/>
            <person name="Banerjee R."/>
            <person name="Barker D.J."/>
            <person name="Barlow K.F."/>
            <person name="Bates K."/>
            <person name="Beare D.M."/>
            <person name="Beasley H."/>
            <person name="Beasley O."/>
            <person name="Bird C.P."/>
            <person name="Blakey S.E."/>
            <person name="Bray-Allen S."/>
            <person name="Brook J."/>
            <person name="Brown A.J."/>
            <person name="Brown J.Y."/>
            <person name="Burford D.C."/>
            <person name="Burrill W."/>
            <person name="Burton J."/>
            <person name="Carder C."/>
            <person name="Carter N.P."/>
            <person name="Chapman J.C."/>
            <person name="Clark S.Y."/>
            <person name="Clark G."/>
            <person name="Clee C.M."/>
            <person name="Clegg S."/>
            <person name="Cobley V."/>
            <person name="Collier R.E."/>
            <person name="Collins J.E."/>
            <person name="Colman L.K."/>
            <person name="Corby N.R."/>
            <person name="Coville G.J."/>
            <person name="Culley K.M."/>
            <person name="Dhami P."/>
            <person name="Davies J."/>
            <person name="Dunn M."/>
            <person name="Earthrowl M.E."/>
            <person name="Ellington A.E."/>
            <person name="Evans K.A."/>
            <person name="Faulkner L."/>
            <person name="Francis M.D."/>
            <person name="Frankish A."/>
            <person name="Frankland J."/>
            <person name="French L."/>
            <person name="Garner P."/>
            <person name="Garnett J."/>
            <person name="Ghori M.J."/>
            <person name="Gilby L.M."/>
            <person name="Gillson C.J."/>
            <person name="Glithero R.J."/>
            <person name="Grafham D.V."/>
            <person name="Grant M."/>
            <person name="Gribble S."/>
            <person name="Griffiths C."/>
            <person name="Griffiths M.N.D."/>
            <person name="Hall R."/>
            <person name="Halls K.S."/>
            <person name="Hammond S."/>
            <person name="Harley J.L."/>
            <person name="Hart E.A."/>
            <person name="Heath P.D."/>
            <person name="Heathcott R."/>
            <person name="Holmes S.J."/>
            <person name="Howden P.J."/>
            <person name="Howe K.L."/>
            <person name="Howell G.R."/>
            <person name="Huckle E."/>
            <person name="Humphray S.J."/>
            <person name="Humphries M.D."/>
            <person name="Hunt A.R."/>
            <person name="Johnson C.M."/>
            <person name="Joy A.A."/>
            <person name="Kay M."/>
            <person name="Keenan S.J."/>
            <person name="Kimberley A.M."/>
            <person name="King A."/>
            <person name="Laird G.K."/>
            <person name="Langford C."/>
            <person name="Lawlor S."/>
            <person name="Leongamornlert D.A."/>
            <person name="Leversha M."/>
            <person name="Lloyd C.R."/>
            <person name="Lloyd D.M."/>
            <person name="Loveland J.E."/>
            <person name="Lovell J."/>
            <person name="Martin S."/>
            <person name="Mashreghi-Mohammadi M."/>
            <person name="Maslen G.L."/>
            <person name="Matthews L."/>
            <person name="McCann O.T."/>
            <person name="McLaren S.J."/>
            <person name="McLay K."/>
            <person name="McMurray A."/>
            <person name="Moore M.J.F."/>
            <person name="Mullikin J.C."/>
            <person name="Niblett D."/>
            <person name="Nickerson T."/>
            <person name="Novik K.L."/>
            <person name="Oliver K."/>
            <person name="Overton-Larty E.K."/>
            <person name="Parker A."/>
            <person name="Patel R."/>
            <person name="Pearce A.V."/>
            <person name="Peck A.I."/>
            <person name="Phillimore B.J.C.T."/>
            <person name="Phillips S."/>
            <person name="Plumb R.W."/>
            <person name="Porter K.M."/>
            <person name="Ramsey Y."/>
            <person name="Ranby S.A."/>
            <person name="Rice C.M."/>
            <person name="Ross M.T."/>
            <person name="Searle S.M."/>
            <person name="Sehra H.K."/>
            <person name="Sheridan E."/>
            <person name="Skuce C.D."/>
            <person name="Smith S."/>
            <person name="Smith M."/>
            <person name="Spraggon L."/>
            <person name="Squares S.L."/>
            <person name="Steward C.A."/>
            <person name="Sycamore N."/>
            <person name="Tamlyn-Hall G."/>
            <person name="Tester J."/>
            <person name="Theaker A.J."/>
            <person name="Thomas D.W."/>
            <person name="Thorpe A."/>
            <person name="Tracey A."/>
            <person name="Tromans A."/>
            <person name="Tubby B."/>
            <person name="Wall M."/>
            <person name="Wallis J.M."/>
            <person name="West A.P."/>
            <person name="White S.S."/>
            <person name="Whitehead S.L."/>
            <person name="Whittaker H."/>
            <person name="Wild A."/>
            <person name="Willey D.J."/>
            <person name="Wilmer T.E."/>
            <person name="Wood J.M."/>
            <person name="Wray P.W."/>
            <person name="Wyatt J.C."/>
            <person name="Young L."/>
            <person name="Younger R.M."/>
            <person name="Bentley D.R."/>
            <person name="Coulson A."/>
            <person name="Durbin R.M."/>
            <person name="Hubbard T."/>
            <person name="Sulston J.E."/>
            <person name="Dunham I."/>
            <person name="Rogers J."/>
            <person name="Beck S."/>
        </authorList>
    </citation>
    <scope>NUCLEOTIDE SEQUENCE [LARGE SCALE GENOMIC DNA]</scope>
</reference>
<reference key="3">
    <citation type="submission" date="2005-09" db="EMBL/GenBank/DDBJ databases">
        <authorList>
            <person name="Mural R.J."/>
            <person name="Istrail S."/>
            <person name="Sutton G.G."/>
            <person name="Florea L."/>
            <person name="Halpern A.L."/>
            <person name="Mobarry C.M."/>
            <person name="Lippert R."/>
            <person name="Walenz B."/>
            <person name="Shatkay H."/>
            <person name="Dew I."/>
            <person name="Miller J.R."/>
            <person name="Flanigan M.J."/>
            <person name="Edwards N.J."/>
            <person name="Bolanos R."/>
            <person name="Fasulo D."/>
            <person name="Halldorsson B.V."/>
            <person name="Hannenhalli S."/>
            <person name="Turner R."/>
            <person name="Yooseph S."/>
            <person name="Lu F."/>
            <person name="Nusskern D.R."/>
            <person name="Shue B.C."/>
            <person name="Zheng X.H."/>
            <person name="Zhong F."/>
            <person name="Delcher A.L."/>
            <person name="Huson D.H."/>
            <person name="Kravitz S.A."/>
            <person name="Mouchard L."/>
            <person name="Reinert K."/>
            <person name="Remington K.A."/>
            <person name="Clark A.G."/>
            <person name="Waterman M.S."/>
            <person name="Eichler E.E."/>
            <person name="Adams M.D."/>
            <person name="Hunkapiller M.W."/>
            <person name="Myers E.W."/>
            <person name="Venter J.C."/>
        </authorList>
    </citation>
    <scope>NUCLEOTIDE SEQUENCE [LARGE SCALE GENOMIC DNA]</scope>
</reference>
<reference key="4">
    <citation type="journal article" date="2004" name="Genome Res.">
        <title>The status, quality, and expansion of the NIH full-length cDNA project: the Mammalian Gene Collection (MGC).</title>
        <authorList>
            <consortium name="The MGC Project Team"/>
        </authorList>
    </citation>
    <scope>NUCLEOTIDE SEQUENCE [LARGE SCALE MRNA] (ISOFORM 1)</scope>
    <source>
        <tissue>Kidney</tissue>
        <tissue>Ovary</tissue>
    </source>
</reference>
<reference key="5">
    <citation type="journal article" date="2010" name="Sci. Signal.">
        <title>Quantitative phosphoproteomics reveals widespread full phosphorylation site occupancy during mitosis.</title>
        <authorList>
            <person name="Olsen J.V."/>
            <person name="Vermeulen M."/>
            <person name="Santamaria A."/>
            <person name="Kumar C."/>
            <person name="Miller M.L."/>
            <person name="Jensen L.J."/>
            <person name="Gnad F."/>
            <person name="Cox J."/>
            <person name="Jensen T.S."/>
            <person name="Nigg E.A."/>
            <person name="Brunak S."/>
            <person name="Mann M."/>
        </authorList>
    </citation>
    <scope>PHOSPHORYLATION [LARGE SCALE ANALYSIS] AT SER-328</scope>
    <scope>IDENTIFICATION BY MASS SPECTROMETRY [LARGE SCALE ANALYSIS]</scope>
    <source>
        <tissue>Cervix carcinoma</tissue>
    </source>
</reference>
<reference key="6">
    <citation type="journal article" date="2013" name="J. Proteome Res.">
        <title>Toward a comprehensive characterization of a human cancer cell phosphoproteome.</title>
        <authorList>
            <person name="Zhou H."/>
            <person name="Di Palma S."/>
            <person name="Preisinger C."/>
            <person name="Peng M."/>
            <person name="Polat A.N."/>
            <person name="Heck A.J."/>
            <person name="Mohammed S."/>
        </authorList>
    </citation>
    <scope>PHOSPHORYLATION [LARGE SCALE ANALYSIS] AT SER-119; SER-291 AND SER-328</scope>
    <scope>IDENTIFICATION BY MASS SPECTROMETRY [LARGE SCALE ANALYSIS]</scope>
    <source>
        <tissue>Erythroleukemia</tissue>
    </source>
</reference>
<reference key="7">
    <citation type="journal article" date="2015" name="Proteomics">
        <title>N-terminome analysis of the human mitochondrial proteome.</title>
        <authorList>
            <person name="Vaca Jacome A.S."/>
            <person name="Rabilloud T."/>
            <person name="Schaeffer-Reiss C."/>
            <person name="Rompais M."/>
            <person name="Ayoub D."/>
            <person name="Lane L."/>
            <person name="Bairoch A."/>
            <person name="Van Dorsselaer A."/>
            <person name="Carapito C."/>
        </authorList>
    </citation>
    <scope>ACETYLATION [LARGE SCALE ANALYSIS] AT SER-2</scope>
    <scope>CLEAVAGE OF INITIATOR METHIONINE [LARGE SCALE ANALYSIS]</scope>
    <scope>IDENTIFICATION BY MASS SPECTROMETRY [LARGE SCALE ANALYSIS]</scope>
</reference>
<protein>
    <recommendedName>
        <fullName>Mitochondrial fission regulator 2</fullName>
    </recommendedName>
    <alternativeName>
        <fullName>DUF729 domain-containing protein 1</fullName>
    </alternativeName>
</protein>
<dbReference type="EMBL" id="AK125758">
    <property type="protein sequence ID" value="BAC86277.1"/>
    <property type="status" value="ALT_SEQ"/>
    <property type="molecule type" value="mRNA"/>
</dbReference>
<dbReference type="EMBL" id="AK292303">
    <property type="protein sequence ID" value="BAF84992.1"/>
    <property type="molecule type" value="mRNA"/>
</dbReference>
<dbReference type="EMBL" id="AL121713">
    <property type="status" value="NOT_ANNOTATED_CDS"/>
    <property type="molecule type" value="Genomic_DNA"/>
</dbReference>
<dbReference type="EMBL" id="AL138828">
    <property type="status" value="NOT_ANNOTATED_CDS"/>
    <property type="molecule type" value="Genomic_DNA"/>
</dbReference>
<dbReference type="EMBL" id="CH471051">
    <property type="protein sequence ID" value="EAW47953.1"/>
    <property type="molecule type" value="Genomic_DNA"/>
</dbReference>
<dbReference type="EMBL" id="CH471051">
    <property type="protein sequence ID" value="EAW47954.1"/>
    <property type="molecule type" value="Genomic_DNA"/>
</dbReference>
<dbReference type="EMBL" id="BC011716">
    <property type="protein sequence ID" value="AAH11716.2"/>
    <property type="molecule type" value="mRNA"/>
</dbReference>
<dbReference type="EMBL" id="BC063688">
    <property type="protein sequence ID" value="AAH63688.2"/>
    <property type="molecule type" value="mRNA"/>
</dbReference>
<dbReference type="CCDS" id="CCDS5176.1">
    <molecule id="Q6P444-1"/>
</dbReference>
<dbReference type="RefSeq" id="NP_001092756.1">
    <molecule id="Q6P444-1"/>
    <property type="nucleotide sequence ID" value="NM_001099286.3"/>
</dbReference>
<dbReference type="RefSeq" id="NP_001305667.1">
    <property type="nucleotide sequence ID" value="NM_001318738.1"/>
</dbReference>
<dbReference type="RefSeq" id="NP_612428.2">
    <molecule id="Q6P444-1"/>
    <property type="nucleotide sequence ID" value="NM_138419.4"/>
</dbReference>
<dbReference type="RefSeq" id="XP_011533712.1">
    <property type="nucleotide sequence ID" value="XM_011535410.2"/>
</dbReference>
<dbReference type="RefSeq" id="XP_011533714.1">
    <property type="nucleotide sequence ID" value="XM_011535412.2"/>
</dbReference>
<dbReference type="RefSeq" id="XP_011533715.1">
    <property type="nucleotide sequence ID" value="XM_011535413.2"/>
</dbReference>
<dbReference type="SMR" id="Q6P444"/>
<dbReference type="BioGRID" id="125224">
    <property type="interactions" value="59"/>
</dbReference>
<dbReference type="FunCoup" id="Q6P444">
    <property type="interactions" value="1359"/>
</dbReference>
<dbReference type="IntAct" id="Q6P444">
    <property type="interactions" value="31"/>
</dbReference>
<dbReference type="MINT" id="Q6P444"/>
<dbReference type="STRING" id="9606.ENSP00000395232"/>
<dbReference type="CarbonylDB" id="Q6P444"/>
<dbReference type="iPTMnet" id="Q6P444"/>
<dbReference type="PhosphoSitePlus" id="Q6P444"/>
<dbReference type="BioMuta" id="MTFR2"/>
<dbReference type="DMDM" id="56404526"/>
<dbReference type="jPOST" id="Q6P444"/>
<dbReference type="MassIVE" id="Q6P444"/>
<dbReference type="PaxDb" id="9606-ENSP00000395232"/>
<dbReference type="PeptideAtlas" id="Q6P444"/>
<dbReference type="ProteomicsDB" id="66942">
    <molecule id="Q6P444-1"/>
</dbReference>
<dbReference type="ProteomicsDB" id="66943">
    <molecule id="Q6P444-2"/>
</dbReference>
<dbReference type="Pumba" id="Q6P444"/>
<dbReference type="Antibodypedia" id="33003">
    <property type="antibodies" value="83 antibodies from 16 providers"/>
</dbReference>
<dbReference type="DNASU" id="113115"/>
<dbReference type="Ensembl" id="ENST00000367784.6">
    <molecule id="Q6P444-2"/>
    <property type="protein sequence ID" value="ENSP00000356758.2"/>
    <property type="gene ID" value="ENSG00000146410.12"/>
</dbReference>
<dbReference type="Ensembl" id="ENST00000420702.6">
    <molecule id="Q6P444-1"/>
    <property type="protein sequence ID" value="ENSP00000395232.1"/>
    <property type="gene ID" value="ENSG00000146410.12"/>
</dbReference>
<dbReference type="Ensembl" id="ENST00000451457.6">
    <molecule id="Q6P444-1"/>
    <property type="protein sequence ID" value="ENSP00000407010.2"/>
    <property type="gene ID" value="ENSG00000146410.12"/>
</dbReference>
<dbReference type="GeneID" id="113115"/>
<dbReference type="KEGG" id="hsa:113115"/>
<dbReference type="MANE-Select" id="ENST00000420702.6">
    <property type="protein sequence ID" value="ENSP00000395232.1"/>
    <property type="RefSeq nucleotide sequence ID" value="NM_001099286.3"/>
    <property type="RefSeq protein sequence ID" value="NP_001092756.1"/>
</dbReference>
<dbReference type="UCSC" id="uc003qgt.2">
    <molecule id="Q6P444-1"/>
    <property type="organism name" value="human"/>
</dbReference>
<dbReference type="AGR" id="HGNC:21115"/>
<dbReference type="CTD" id="113115"/>
<dbReference type="DisGeNET" id="113115"/>
<dbReference type="GeneCards" id="MTFR2"/>
<dbReference type="HGNC" id="HGNC:21115">
    <property type="gene designation" value="MTFR2"/>
</dbReference>
<dbReference type="HPA" id="ENSG00000146410">
    <property type="expression patterns" value="Tissue enhanced (bone marrow, testis)"/>
</dbReference>
<dbReference type="neXtProt" id="NX_Q6P444"/>
<dbReference type="OpenTargets" id="ENSG00000146410"/>
<dbReference type="PharmGKB" id="PA134871105"/>
<dbReference type="VEuPathDB" id="HostDB:ENSG00000146410"/>
<dbReference type="eggNOG" id="ENOG502QUU8">
    <property type="taxonomic scope" value="Eukaryota"/>
</dbReference>
<dbReference type="GeneTree" id="ENSGT00950000183215"/>
<dbReference type="HOGENOM" id="CLU_059135_0_0_1"/>
<dbReference type="InParanoid" id="Q6P444"/>
<dbReference type="OMA" id="VCQKKEY"/>
<dbReference type="OrthoDB" id="2133332at2759"/>
<dbReference type="PAN-GO" id="Q6P444">
    <property type="GO annotations" value="3 GO annotations based on evolutionary models"/>
</dbReference>
<dbReference type="PhylomeDB" id="Q6P444"/>
<dbReference type="TreeFam" id="TF331404"/>
<dbReference type="PathwayCommons" id="Q6P444"/>
<dbReference type="SignaLink" id="Q6P444"/>
<dbReference type="BioGRID-ORCS" id="113115">
    <property type="hits" value="6 hits in 1147 CRISPR screens"/>
</dbReference>
<dbReference type="GenomeRNAi" id="113115"/>
<dbReference type="Pharos" id="Q6P444">
    <property type="development level" value="Tbio"/>
</dbReference>
<dbReference type="PRO" id="PR:Q6P444"/>
<dbReference type="Proteomes" id="UP000005640">
    <property type="component" value="Chromosome 6"/>
</dbReference>
<dbReference type="RNAct" id="Q6P444">
    <property type="molecule type" value="protein"/>
</dbReference>
<dbReference type="Bgee" id="ENSG00000146410">
    <property type="expression patterns" value="Expressed in buccal mucosa cell and 125 other cell types or tissues"/>
</dbReference>
<dbReference type="ExpressionAtlas" id="Q6P444">
    <property type="expression patterns" value="baseline and differential"/>
</dbReference>
<dbReference type="GO" id="GO:0005739">
    <property type="term" value="C:mitochondrion"/>
    <property type="evidence" value="ECO:0006056"/>
    <property type="project" value="FlyBase"/>
</dbReference>
<dbReference type="GO" id="GO:0009060">
    <property type="term" value="P:aerobic respiration"/>
    <property type="evidence" value="ECO:0000250"/>
    <property type="project" value="UniProtKB"/>
</dbReference>
<dbReference type="GO" id="GO:0000266">
    <property type="term" value="P:mitochondrial fission"/>
    <property type="evidence" value="ECO:0000250"/>
    <property type="project" value="UniProtKB"/>
</dbReference>
<dbReference type="GO" id="GO:0007005">
    <property type="term" value="P:mitochondrion organization"/>
    <property type="evidence" value="ECO:0000250"/>
    <property type="project" value="UniProtKB"/>
</dbReference>
<dbReference type="InterPro" id="IPR007972">
    <property type="entry name" value="Mtfr1"/>
</dbReference>
<dbReference type="PANTHER" id="PTHR14215:SF2">
    <property type="entry name" value="MITOCHONDRIAL FISSION REGULATOR 2"/>
    <property type="match status" value="1"/>
</dbReference>
<dbReference type="PANTHER" id="PTHR14215">
    <property type="entry name" value="PROTEIN OF UNKNOWN FUNCTION DUF729"/>
    <property type="match status" value="1"/>
</dbReference>
<dbReference type="Pfam" id="PF05308">
    <property type="entry name" value="Mito_fiss_reg"/>
    <property type="match status" value="1"/>
</dbReference>
<evidence type="ECO:0000250" key="1"/>
<evidence type="ECO:0000256" key="2">
    <source>
        <dbReference type="SAM" id="MobiDB-lite"/>
    </source>
</evidence>
<evidence type="ECO:0000303" key="3">
    <source>
    </source>
</evidence>
<evidence type="ECO:0000305" key="4"/>
<evidence type="ECO:0007744" key="5">
    <source>
    </source>
</evidence>
<evidence type="ECO:0007744" key="6">
    <source>
    </source>
</evidence>
<evidence type="ECO:0007744" key="7">
    <source>
    </source>
</evidence>
<sequence>MSLILNILREMLEYFGVPVEQVLLIWENKDYGSTRSIVRIIGKMLPLEPCRRPNFELIPLLNSVDSDNCGSMVPSFADILYVANDEEASYLRFRNSIWKNEEEKVEIFHPLRLVRDPLSPAVRQKETVKNDLPVNEAAIRKIAALENELTFLRSQIAAIVEMQELKNSTNSSSFGLSDERISLGQLSSSRAAHLSVDPDQLPGSVLSPPPPPPLPPQFSSLQPPCFPPVQPGSNNICDSDNPATEMSKQNPAANKTNYSHHSKSQRNKDIPNMLDVLKDMNKVKLRAIERSPGGRPIHKRKRQNSHWDPVSLISHALKQKFAFQEDDSFEKENRSWESSPFSSPETSRFGHHISQSEGQRTKEEMVNTKAVDQGISNTSLLNSRI</sequence>
<name>MTFR2_HUMAN</name>
<proteinExistence type="evidence at protein level"/>
<accession>Q6P444</accession>
<accession>A8K8D8</accession>
<accession>E1P585</accession>
<accession>Q5JWR7</accession>
<accession>Q6ZUE8</accession>
<accession>Q7L3U6</accession>
<accession>Q9BZ39</accession>